<reference key="1">
    <citation type="journal article" date="1998" name="Hum. Mol. Genet.">
        <title>A candidate mammalian DNA methyltransferase related to pmt1p of fission yeast.</title>
        <authorList>
            <person name="Yoder J.A."/>
            <person name="Bestor T.H."/>
        </authorList>
    </citation>
    <scope>NUCLEOTIDE SEQUENCE [MRNA] (ISOFORM A)</scope>
</reference>
<reference key="2">
    <citation type="journal article" date="1998" name="FEBS Lett.">
        <title>Cloning and analysis of a novel human putative DNA methyltransferase.</title>
        <authorList>
            <person name="Van den Wyngaert I."/>
            <person name="Sprengel J."/>
            <person name="Kass S.U."/>
            <person name="Luyten W.H.M.L."/>
        </authorList>
    </citation>
    <scope>NUCLEOTIDE SEQUENCE [MRNA] (ISOFORM A)</scope>
</reference>
<reference key="3">
    <citation type="journal article" date="1998" name="Nucleic Acids Res.">
        <title>Dnmt2 is not required for de novo and maintenance methylation of viral DNA in embryonic stem cells.</title>
        <authorList>
            <person name="Okano M."/>
            <person name="Xie S."/>
            <person name="Li E."/>
        </authorList>
    </citation>
    <scope>NUCLEOTIDE SEQUENCE [MRNA] (ISOFORM A)</scope>
    <source>
        <tissue>Heart</tissue>
    </source>
</reference>
<reference key="4">
    <citation type="submission" date="2007-02" db="EMBL/GenBank/DDBJ databases">
        <authorList>
            <consortium name="NHLBI resequencing and genotyping service (RS&amp;G)"/>
        </authorList>
    </citation>
    <scope>NUCLEOTIDE SEQUENCE [GENOMIC DNA]</scope>
</reference>
<reference key="5">
    <citation type="journal article" date="2004" name="Nature">
        <title>The DNA sequence and comparative analysis of human chromosome 10.</title>
        <authorList>
            <person name="Deloukas P."/>
            <person name="Earthrowl M.E."/>
            <person name="Grafham D.V."/>
            <person name="Rubenfield M."/>
            <person name="French L."/>
            <person name="Steward C.A."/>
            <person name="Sims S.K."/>
            <person name="Jones M.C."/>
            <person name="Searle S."/>
            <person name="Scott C."/>
            <person name="Howe K."/>
            <person name="Hunt S.E."/>
            <person name="Andrews T.D."/>
            <person name="Gilbert J.G.R."/>
            <person name="Swarbreck D."/>
            <person name="Ashurst J.L."/>
            <person name="Taylor A."/>
            <person name="Battles J."/>
            <person name="Bird C.P."/>
            <person name="Ainscough R."/>
            <person name="Almeida J.P."/>
            <person name="Ashwell R.I.S."/>
            <person name="Ambrose K.D."/>
            <person name="Babbage A.K."/>
            <person name="Bagguley C.L."/>
            <person name="Bailey J."/>
            <person name="Banerjee R."/>
            <person name="Bates K."/>
            <person name="Beasley H."/>
            <person name="Bray-Allen S."/>
            <person name="Brown A.J."/>
            <person name="Brown J.Y."/>
            <person name="Burford D.C."/>
            <person name="Burrill W."/>
            <person name="Burton J."/>
            <person name="Cahill P."/>
            <person name="Camire D."/>
            <person name="Carter N.P."/>
            <person name="Chapman J.C."/>
            <person name="Clark S.Y."/>
            <person name="Clarke G."/>
            <person name="Clee C.M."/>
            <person name="Clegg S."/>
            <person name="Corby N."/>
            <person name="Coulson A."/>
            <person name="Dhami P."/>
            <person name="Dutta I."/>
            <person name="Dunn M."/>
            <person name="Faulkner L."/>
            <person name="Frankish A."/>
            <person name="Frankland J.A."/>
            <person name="Garner P."/>
            <person name="Garnett J."/>
            <person name="Gribble S."/>
            <person name="Griffiths C."/>
            <person name="Grocock R."/>
            <person name="Gustafson E."/>
            <person name="Hammond S."/>
            <person name="Harley J.L."/>
            <person name="Hart E."/>
            <person name="Heath P.D."/>
            <person name="Ho T.P."/>
            <person name="Hopkins B."/>
            <person name="Horne J."/>
            <person name="Howden P.J."/>
            <person name="Huckle E."/>
            <person name="Hynds C."/>
            <person name="Johnson C."/>
            <person name="Johnson D."/>
            <person name="Kana A."/>
            <person name="Kay M."/>
            <person name="Kimberley A.M."/>
            <person name="Kershaw J.K."/>
            <person name="Kokkinaki M."/>
            <person name="Laird G.K."/>
            <person name="Lawlor S."/>
            <person name="Lee H.M."/>
            <person name="Leongamornlert D.A."/>
            <person name="Laird G."/>
            <person name="Lloyd C."/>
            <person name="Lloyd D.M."/>
            <person name="Loveland J."/>
            <person name="Lovell J."/>
            <person name="McLaren S."/>
            <person name="McLay K.E."/>
            <person name="McMurray A."/>
            <person name="Mashreghi-Mohammadi M."/>
            <person name="Matthews L."/>
            <person name="Milne S."/>
            <person name="Nickerson T."/>
            <person name="Nguyen M."/>
            <person name="Overton-Larty E."/>
            <person name="Palmer S.A."/>
            <person name="Pearce A.V."/>
            <person name="Peck A.I."/>
            <person name="Pelan S."/>
            <person name="Phillimore B."/>
            <person name="Porter K."/>
            <person name="Rice C.M."/>
            <person name="Rogosin A."/>
            <person name="Ross M.T."/>
            <person name="Sarafidou T."/>
            <person name="Sehra H.K."/>
            <person name="Shownkeen R."/>
            <person name="Skuce C.D."/>
            <person name="Smith M."/>
            <person name="Standring L."/>
            <person name="Sycamore N."/>
            <person name="Tester J."/>
            <person name="Thorpe A."/>
            <person name="Torcasso W."/>
            <person name="Tracey A."/>
            <person name="Tromans A."/>
            <person name="Tsolas J."/>
            <person name="Wall M."/>
            <person name="Walsh J."/>
            <person name="Wang H."/>
            <person name="Weinstock K."/>
            <person name="West A.P."/>
            <person name="Willey D.L."/>
            <person name="Whitehead S.L."/>
            <person name="Wilming L."/>
            <person name="Wray P.W."/>
            <person name="Young L."/>
            <person name="Chen Y."/>
            <person name="Lovering R.C."/>
            <person name="Moschonas N.K."/>
            <person name="Siebert R."/>
            <person name="Fechtel K."/>
            <person name="Bentley D."/>
            <person name="Durbin R.M."/>
            <person name="Hubbard T."/>
            <person name="Doucette-Stamm L."/>
            <person name="Beck S."/>
            <person name="Smith D.R."/>
            <person name="Rogers J."/>
        </authorList>
    </citation>
    <scope>NUCLEOTIDE SEQUENCE [LARGE SCALE GENOMIC DNA]</scope>
</reference>
<reference key="6">
    <citation type="submission" date="2005-09" db="EMBL/GenBank/DDBJ databases">
        <authorList>
            <person name="Mural R.J."/>
            <person name="Istrail S."/>
            <person name="Sutton G.G."/>
            <person name="Florea L."/>
            <person name="Halpern A.L."/>
            <person name="Mobarry C.M."/>
            <person name="Lippert R."/>
            <person name="Walenz B."/>
            <person name="Shatkay H."/>
            <person name="Dew I."/>
            <person name="Miller J.R."/>
            <person name="Flanigan M.J."/>
            <person name="Edwards N.J."/>
            <person name="Bolanos R."/>
            <person name="Fasulo D."/>
            <person name="Halldorsson B.V."/>
            <person name="Hannenhalli S."/>
            <person name="Turner R."/>
            <person name="Yooseph S."/>
            <person name="Lu F."/>
            <person name="Nusskern D.R."/>
            <person name="Shue B.C."/>
            <person name="Zheng X.H."/>
            <person name="Zhong F."/>
            <person name="Delcher A.L."/>
            <person name="Huson D.H."/>
            <person name="Kravitz S.A."/>
            <person name="Mouchard L."/>
            <person name="Reinert K."/>
            <person name="Remington K.A."/>
            <person name="Clark A.G."/>
            <person name="Waterman M.S."/>
            <person name="Eichler E.E."/>
            <person name="Adams M.D."/>
            <person name="Hunkapiller M.W."/>
            <person name="Myers E.W."/>
            <person name="Venter J.C."/>
        </authorList>
    </citation>
    <scope>NUCLEOTIDE SEQUENCE [LARGE SCALE GENOMIC DNA]</scope>
</reference>
<reference key="7">
    <citation type="journal article" date="2004" name="Genome Res.">
        <title>The status, quality, and expansion of the NIH full-length cDNA project: the Mammalian Gene Collection (MGC).</title>
        <authorList>
            <consortium name="The MGC Project Team"/>
        </authorList>
    </citation>
    <scope>NUCLEOTIDE SEQUENCE [LARGE SCALE MRNA] (ISOFORM A)</scope>
    <scope>VARIANT TYR-101</scope>
    <source>
        <tissue>Uterus</tissue>
    </source>
</reference>
<reference key="8">
    <citation type="journal article" date="2001" name="Int. J. Biochem. Cell Biol.">
        <title>Five novel alternatively spliced transcripts of DNA (cytosine-5) methyltransferase 2 in human peripheral blood leukocytes.</title>
        <authorList>
            <person name="Franchina M."/>
            <person name="Hooper J."/>
            <person name="Kay P.H."/>
        </authorList>
    </citation>
    <scope>NUCLEOTIDE SEQUENCE [MRNA] OF 19-179 (ISOFORMS A; B; C; D; E AND F)</scope>
    <source>
        <tissue>Peripheral blood leukocyte</tissue>
    </source>
</reference>
<reference key="9">
    <citation type="journal article" date="2006" name="Science">
        <title>Methylation of tRNAAsp by the DNA methyltransferase homolog Dnmt2.</title>
        <authorList>
            <person name="Goll M.G."/>
            <person name="Kirpekar F."/>
            <person name="Maggert K.A."/>
            <person name="Yoder J.A."/>
            <person name="Hsieh C.L."/>
            <person name="Zhang X."/>
            <person name="Golic K.G."/>
            <person name="Jacobsen S.E."/>
            <person name="Bestor T.H."/>
        </authorList>
    </citation>
    <scope>FUNCTION</scope>
    <scope>SUBCELLULAR LOCATION</scope>
    <scope>CATALYTIC ACTIVITY</scope>
</reference>
<reference key="10">
    <citation type="journal article" date="2018" name="EMBO J.">
        <title>Queuosine-modified tRNAs confer nutritional control of protein translation.</title>
        <authorList>
            <person name="Tuorto F."/>
            <person name="Legrand C."/>
            <person name="Cirzi C."/>
            <person name="Federico G."/>
            <person name="Liebers R."/>
            <person name="Mueller M."/>
            <person name="Ehrenhofer-Murray A.E."/>
            <person name="Dittmar G."/>
            <person name="Groene H.J."/>
            <person name="Lyko F."/>
        </authorList>
    </citation>
    <scope>FUNCTION</scope>
</reference>
<reference key="11">
    <citation type="journal article" date="2001" name="Nucleic Acids Res.">
        <title>Structure of human DNMT2, an enigmatic DNA methyltransferase homolog that displays denaturant-resistant binding to DNA.</title>
        <authorList>
            <person name="Dong A."/>
            <person name="Yoder J.A."/>
            <person name="Zhang X."/>
            <person name="Zhou L."/>
            <person name="Bestor T.H."/>
            <person name="Cheng X."/>
        </authorList>
    </citation>
    <scope>X-RAY CRYSTALLOGRAPHY (1.8 ANGSTROMS) IN COMPLEX WITH S-ADENOSYL-L-HOMOCYSTEINE</scope>
</reference>
<evidence type="ECO:0000255" key="1">
    <source>
        <dbReference type="PROSITE-ProRule" id="PRU01016"/>
    </source>
</evidence>
<evidence type="ECO:0000269" key="2">
    <source>
    </source>
</evidence>
<evidence type="ECO:0000269" key="3">
    <source>
    </source>
</evidence>
<evidence type="ECO:0000269" key="4">
    <source>
    </source>
</evidence>
<evidence type="ECO:0000269" key="5">
    <source>
    </source>
</evidence>
<evidence type="ECO:0000303" key="6">
    <source>
    </source>
</evidence>
<evidence type="ECO:0000303" key="7">
    <source>
    </source>
</evidence>
<evidence type="ECO:0000305" key="8"/>
<evidence type="ECO:0007744" key="9">
    <source>
        <dbReference type="PDB" id="1G55"/>
    </source>
</evidence>
<evidence type="ECO:0007829" key="10">
    <source>
        <dbReference type="PDB" id="1G55"/>
    </source>
</evidence>
<dbReference type="EC" id="2.1.1.204" evidence="4"/>
<dbReference type="EMBL" id="AF012128">
    <property type="protein sequence ID" value="AAC51939.1"/>
    <property type="molecule type" value="mRNA"/>
</dbReference>
<dbReference type="EMBL" id="AJ223333">
    <property type="protein sequence ID" value="CAA11272.1"/>
    <property type="molecule type" value="mRNA"/>
</dbReference>
<dbReference type="EMBL" id="AF045888">
    <property type="protein sequence ID" value="AAC39764.1"/>
    <property type="molecule type" value="mRNA"/>
</dbReference>
<dbReference type="EMBL" id="EF444974">
    <property type="protein sequence ID" value="ACA05980.1"/>
    <property type="molecule type" value="Genomic_DNA"/>
</dbReference>
<dbReference type="EMBL" id="EF444974">
    <property type="protein sequence ID" value="ACA05984.1"/>
    <property type="molecule type" value="Genomic_DNA"/>
</dbReference>
<dbReference type="EMBL" id="EF444974">
    <property type="protein sequence ID" value="ACA05985.1"/>
    <property type="molecule type" value="Genomic_DNA"/>
</dbReference>
<dbReference type="EMBL" id="EF444974">
    <property type="protein sequence ID" value="ACA05986.1"/>
    <property type="molecule type" value="Genomic_DNA"/>
</dbReference>
<dbReference type="EMBL" id="AC067747">
    <property type="status" value="NOT_ANNOTATED_CDS"/>
    <property type="molecule type" value="Genomic_DNA"/>
</dbReference>
<dbReference type="EMBL" id="AL133415">
    <property type="status" value="NOT_ANNOTATED_CDS"/>
    <property type="molecule type" value="Genomic_DNA"/>
</dbReference>
<dbReference type="EMBL" id="CH471072">
    <property type="protein sequence ID" value="EAW86218.1"/>
    <property type="molecule type" value="Genomic_DNA"/>
</dbReference>
<dbReference type="EMBL" id="CH471072">
    <property type="protein sequence ID" value="EAW86219.1"/>
    <property type="molecule type" value="Genomic_DNA"/>
</dbReference>
<dbReference type="EMBL" id="BC047733">
    <property type="protein sequence ID" value="AAH47733.1"/>
    <property type="molecule type" value="mRNA"/>
</dbReference>
<dbReference type="EMBL" id="AF329940">
    <property type="protein sequence ID" value="AAK68034.1"/>
    <property type="molecule type" value="mRNA"/>
</dbReference>
<dbReference type="EMBL" id="AF329941">
    <property type="protein sequence ID" value="AAK68035.1"/>
    <property type="molecule type" value="mRNA"/>
</dbReference>
<dbReference type="EMBL" id="AF329942">
    <property type="protein sequence ID" value="AAK68036.1"/>
    <property type="molecule type" value="mRNA"/>
</dbReference>
<dbReference type="EMBL" id="AF329943">
    <property type="protein sequence ID" value="AAK68037.1"/>
    <property type="molecule type" value="mRNA"/>
</dbReference>
<dbReference type="EMBL" id="AF329944">
    <property type="protein sequence ID" value="AAK68033.1"/>
    <property type="molecule type" value="mRNA"/>
</dbReference>
<dbReference type="CCDS" id="CCDS7114.1">
    <molecule id="O14717-1"/>
</dbReference>
<dbReference type="RefSeq" id="NP_001307935.1">
    <property type="nucleotide sequence ID" value="NM_001321006.1"/>
</dbReference>
<dbReference type="RefSeq" id="NP_001307936.1">
    <property type="nucleotide sequence ID" value="NM_001321007.1"/>
</dbReference>
<dbReference type="RefSeq" id="NP_004403.1">
    <molecule id="O14717-1"/>
    <property type="nucleotide sequence ID" value="NM_004412.7"/>
</dbReference>
<dbReference type="RefSeq" id="XP_005252432.1">
    <property type="nucleotide sequence ID" value="XM_005252375.4"/>
</dbReference>
<dbReference type="PDB" id="1G55">
    <property type="method" value="X-ray"/>
    <property type="resolution" value="1.80 A"/>
    <property type="chains" value="A=2-391"/>
</dbReference>
<dbReference type="PDBsum" id="1G55"/>
<dbReference type="SMR" id="O14717"/>
<dbReference type="BioGRID" id="108124">
    <property type="interactions" value="21"/>
</dbReference>
<dbReference type="FunCoup" id="O14717">
    <property type="interactions" value="3398"/>
</dbReference>
<dbReference type="IntAct" id="O14717">
    <property type="interactions" value="15"/>
</dbReference>
<dbReference type="STRING" id="9606.ENSP00000367030"/>
<dbReference type="BindingDB" id="O14717"/>
<dbReference type="ChEMBL" id="CHEMBL4523124"/>
<dbReference type="DrugBank" id="DB09462">
    <property type="generic name" value="Glycerin"/>
</dbReference>
<dbReference type="DrugBank" id="DB00738">
    <property type="generic name" value="Pentamidine"/>
</dbReference>
<dbReference type="DrugBank" id="DB01752">
    <property type="generic name" value="S-adenosyl-L-homocysteine"/>
</dbReference>
<dbReference type="iPTMnet" id="O14717"/>
<dbReference type="PhosphoSitePlus" id="O14717"/>
<dbReference type="BioMuta" id="TRDMT1"/>
<dbReference type="jPOST" id="O14717"/>
<dbReference type="MassIVE" id="O14717"/>
<dbReference type="PaxDb" id="9606-ENSP00000367030"/>
<dbReference type="PeptideAtlas" id="O14717"/>
<dbReference type="ProteomicsDB" id="48175">
    <molecule id="O14717-1"/>
</dbReference>
<dbReference type="ProteomicsDB" id="48176">
    <molecule id="O14717-2"/>
</dbReference>
<dbReference type="ProteomicsDB" id="48177">
    <molecule id="O14717-3"/>
</dbReference>
<dbReference type="ProteomicsDB" id="48178">
    <molecule id="O14717-4"/>
</dbReference>
<dbReference type="ProteomicsDB" id="48179">
    <molecule id="O14717-5"/>
</dbReference>
<dbReference type="ProteomicsDB" id="48180">
    <molecule id="O14717-6"/>
</dbReference>
<dbReference type="Pumba" id="O14717"/>
<dbReference type="Antibodypedia" id="4005">
    <property type="antibodies" value="470 antibodies from 36 providers"/>
</dbReference>
<dbReference type="DNASU" id="1787"/>
<dbReference type="Ensembl" id="ENST00000377799.8">
    <molecule id="O14717-1"/>
    <property type="protein sequence ID" value="ENSP00000367030.3"/>
    <property type="gene ID" value="ENSG00000107614.22"/>
</dbReference>
<dbReference type="Ensembl" id="ENST00000495022.5">
    <molecule id="O14717-4"/>
    <property type="protein sequence ID" value="ENSP00000417594.1"/>
    <property type="gene ID" value="ENSG00000107614.22"/>
</dbReference>
<dbReference type="GeneID" id="1787"/>
<dbReference type="KEGG" id="hsa:1787"/>
<dbReference type="MANE-Select" id="ENST00000377799.8">
    <property type="protein sequence ID" value="ENSP00000367030.3"/>
    <property type="RefSeq nucleotide sequence ID" value="NM_004412.7"/>
    <property type="RefSeq protein sequence ID" value="NP_004403.1"/>
</dbReference>
<dbReference type="UCSC" id="uc057sar.1">
    <molecule id="O14717-1"/>
    <property type="organism name" value="human"/>
</dbReference>
<dbReference type="AGR" id="HGNC:2977"/>
<dbReference type="CTD" id="1787"/>
<dbReference type="DisGeNET" id="1787"/>
<dbReference type="GeneCards" id="TRDMT1"/>
<dbReference type="HGNC" id="HGNC:2977">
    <property type="gene designation" value="TRDMT1"/>
</dbReference>
<dbReference type="HPA" id="ENSG00000107614">
    <property type="expression patterns" value="Low tissue specificity"/>
</dbReference>
<dbReference type="MIM" id="602478">
    <property type="type" value="gene"/>
</dbReference>
<dbReference type="neXtProt" id="NX_O14717"/>
<dbReference type="OpenTargets" id="ENSG00000107614"/>
<dbReference type="PharmGKB" id="PA162406922"/>
<dbReference type="VEuPathDB" id="HostDB:ENSG00000107614"/>
<dbReference type="eggNOG" id="KOG0919">
    <property type="taxonomic scope" value="Eukaryota"/>
</dbReference>
<dbReference type="GeneTree" id="ENSGT00390000016416"/>
<dbReference type="HOGENOM" id="CLU_049101_0_0_1"/>
<dbReference type="InParanoid" id="O14717"/>
<dbReference type="OMA" id="HYAFKYA"/>
<dbReference type="OrthoDB" id="414133at2759"/>
<dbReference type="PAN-GO" id="O14717">
    <property type="GO annotations" value="3 GO annotations based on evolutionary models"/>
</dbReference>
<dbReference type="PhylomeDB" id="O14717"/>
<dbReference type="TreeFam" id="TF300024"/>
<dbReference type="BioCyc" id="MetaCyc:HS03011-MONOMER"/>
<dbReference type="BRENDA" id="2.1.1.202">
    <property type="organism ID" value="2681"/>
</dbReference>
<dbReference type="BRENDA" id="2.1.1.204">
    <property type="organism ID" value="2681"/>
</dbReference>
<dbReference type="PathwayCommons" id="O14717"/>
<dbReference type="Reactome" id="R-HSA-6782315">
    <property type="pathway name" value="tRNA modification in the nucleus and cytosol"/>
</dbReference>
<dbReference type="SignaLink" id="O14717"/>
<dbReference type="BioGRID-ORCS" id="1787">
    <property type="hits" value="13 hits in 1164 CRISPR screens"/>
</dbReference>
<dbReference type="CD-CODE" id="232F8A39">
    <property type="entry name" value="P-body"/>
</dbReference>
<dbReference type="CD-CODE" id="DEE660B4">
    <property type="entry name" value="Stress granule"/>
</dbReference>
<dbReference type="ChiTaRS" id="TRDMT1">
    <property type="organism name" value="human"/>
</dbReference>
<dbReference type="EvolutionaryTrace" id="O14717"/>
<dbReference type="GeneWiki" id="TRDMT1"/>
<dbReference type="GenomeRNAi" id="1787"/>
<dbReference type="Pharos" id="O14717">
    <property type="development level" value="Tbio"/>
</dbReference>
<dbReference type="PRO" id="PR:O14717"/>
<dbReference type="Proteomes" id="UP000005640">
    <property type="component" value="Chromosome 10"/>
</dbReference>
<dbReference type="RNAct" id="O14717">
    <property type="molecule type" value="protein"/>
</dbReference>
<dbReference type="Bgee" id="ENSG00000107614">
    <property type="expression patterns" value="Expressed in ventricular zone and 130 other cell types or tissues"/>
</dbReference>
<dbReference type="ExpressionAtlas" id="O14717">
    <property type="expression patterns" value="baseline and differential"/>
</dbReference>
<dbReference type="GO" id="GO:0005737">
    <property type="term" value="C:cytoplasm"/>
    <property type="evidence" value="ECO:0000314"/>
    <property type="project" value="MGI"/>
</dbReference>
<dbReference type="GO" id="GO:0005654">
    <property type="term" value="C:nucleoplasm"/>
    <property type="evidence" value="ECO:0000304"/>
    <property type="project" value="Reactome"/>
</dbReference>
<dbReference type="GO" id="GO:0005634">
    <property type="term" value="C:nucleus"/>
    <property type="evidence" value="ECO:0000318"/>
    <property type="project" value="GO_Central"/>
</dbReference>
<dbReference type="GO" id="GO:0003723">
    <property type="term" value="F:RNA binding"/>
    <property type="evidence" value="ECO:0007669"/>
    <property type="project" value="UniProtKB-KW"/>
</dbReference>
<dbReference type="GO" id="GO:0016428">
    <property type="term" value="F:tRNA (cytidine-5-)-methyltransferase activity"/>
    <property type="evidence" value="ECO:0000314"/>
    <property type="project" value="UniProt"/>
</dbReference>
<dbReference type="GO" id="GO:0008175">
    <property type="term" value="F:tRNA methyltransferase activity"/>
    <property type="evidence" value="ECO:0000314"/>
    <property type="project" value="MGI"/>
</dbReference>
<dbReference type="GO" id="GO:0030488">
    <property type="term" value="P:tRNA methylation"/>
    <property type="evidence" value="ECO:0000314"/>
    <property type="project" value="MGI"/>
</dbReference>
<dbReference type="GO" id="GO:0006400">
    <property type="term" value="P:tRNA modification"/>
    <property type="evidence" value="ECO:0000314"/>
    <property type="project" value="UniProt"/>
</dbReference>
<dbReference type="GO" id="GO:0036416">
    <property type="term" value="P:tRNA stabilization"/>
    <property type="evidence" value="ECO:0000250"/>
    <property type="project" value="UniProtKB"/>
</dbReference>
<dbReference type="CDD" id="cd00315">
    <property type="entry name" value="Cyt_C5_DNA_methylase"/>
    <property type="match status" value="1"/>
</dbReference>
<dbReference type="FunFam" id="3.40.50.150:FF:000285">
    <property type="entry name" value="tRNA (cytosine(38)-C(5))-methyltransferase"/>
    <property type="match status" value="1"/>
</dbReference>
<dbReference type="FunFam" id="3.90.120.10:FF:000005">
    <property type="entry name" value="tRNA (Cytosine(38)-C(5))-methyltransferase isoform X1"/>
    <property type="match status" value="1"/>
</dbReference>
<dbReference type="Gene3D" id="3.90.120.10">
    <property type="entry name" value="DNA Methylase, subunit A, domain 2"/>
    <property type="match status" value="1"/>
</dbReference>
<dbReference type="Gene3D" id="3.40.50.150">
    <property type="entry name" value="Vaccinia Virus protein VP39"/>
    <property type="match status" value="1"/>
</dbReference>
<dbReference type="IDEAL" id="IID00004"/>
<dbReference type="InterPro" id="IPR050750">
    <property type="entry name" value="C5-MTase"/>
</dbReference>
<dbReference type="InterPro" id="IPR001525">
    <property type="entry name" value="C5_MeTfrase"/>
</dbReference>
<dbReference type="InterPro" id="IPR031303">
    <property type="entry name" value="C5_meth_CS"/>
</dbReference>
<dbReference type="InterPro" id="IPR029063">
    <property type="entry name" value="SAM-dependent_MTases_sf"/>
</dbReference>
<dbReference type="NCBIfam" id="TIGR00675">
    <property type="entry name" value="dcm"/>
    <property type="match status" value="1"/>
</dbReference>
<dbReference type="PANTHER" id="PTHR46098">
    <property type="entry name" value="TRNA (CYTOSINE(38)-C(5))-METHYLTRANSFERASE"/>
    <property type="match status" value="1"/>
</dbReference>
<dbReference type="PANTHER" id="PTHR46098:SF1">
    <property type="entry name" value="TRNA (CYTOSINE(38)-C(5))-METHYLTRANSFERASE"/>
    <property type="match status" value="1"/>
</dbReference>
<dbReference type="Pfam" id="PF00145">
    <property type="entry name" value="DNA_methylase"/>
    <property type="match status" value="1"/>
</dbReference>
<dbReference type="PRINTS" id="PR00105">
    <property type="entry name" value="C5METTRFRASE"/>
</dbReference>
<dbReference type="SUPFAM" id="SSF53335">
    <property type="entry name" value="S-adenosyl-L-methionine-dependent methyltransferases"/>
    <property type="match status" value="1"/>
</dbReference>
<dbReference type="PROSITE" id="PS00095">
    <property type="entry name" value="C5_MTASE_2"/>
    <property type="match status" value="1"/>
</dbReference>
<dbReference type="PROSITE" id="PS51679">
    <property type="entry name" value="SAM_MT_C5"/>
    <property type="match status" value="1"/>
</dbReference>
<name>TRDMT_HUMAN</name>
<keyword id="KW-0002">3D-structure</keyword>
<keyword id="KW-0025">Alternative splicing</keyword>
<keyword id="KW-0963">Cytoplasm</keyword>
<keyword id="KW-0489">Methyltransferase</keyword>
<keyword id="KW-1267">Proteomics identification</keyword>
<keyword id="KW-1185">Reference proteome</keyword>
<keyword id="KW-0694">RNA-binding</keyword>
<keyword id="KW-0949">S-adenosyl-L-methionine</keyword>
<keyword id="KW-0808">Transferase</keyword>
<keyword id="KW-0819">tRNA processing</keyword>
<comment type="function">
    <text evidence="4 5">Specifically methylates cytosine 38 in the anticodon loop of tRNA(Asp) (PubMed:16424344). Has higher activity on tRNA(Asp) modified with queuosine at position 34 (PubMed:30093495).</text>
</comment>
<comment type="catalytic activity">
    <reaction evidence="4">
        <text>cytidine(38) in tRNA + S-adenosyl-L-methionine = 5-methylcytidine(38) in tRNA + S-adenosyl-L-homocysteine + H(+)</text>
        <dbReference type="Rhea" id="RHEA:42956"/>
        <dbReference type="Rhea" id="RHEA-COMP:10299"/>
        <dbReference type="Rhea" id="RHEA-COMP:10300"/>
        <dbReference type="ChEBI" id="CHEBI:15378"/>
        <dbReference type="ChEBI" id="CHEBI:57856"/>
        <dbReference type="ChEBI" id="CHEBI:59789"/>
        <dbReference type="ChEBI" id="CHEBI:74483"/>
        <dbReference type="ChEBI" id="CHEBI:82748"/>
        <dbReference type="EC" id="2.1.1.204"/>
    </reaction>
    <physiologicalReaction direction="left-to-right" evidence="4">
        <dbReference type="Rhea" id="RHEA:42957"/>
    </physiologicalReaction>
</comment>
<comment type="subcellular location">
    <subcellularLocation>
        <location evidence="4">Cytoplasm</location>
    </subcellularLocation>
</comment>
<comment type="alternative products">
    <event type="alternative splicing"/>
    <isoform>
        <id>O14717-1</id>
        <name>A</name>
        <sequence type="displayed"/>
    </isoform>
    <isoform>
        <id>O14717-2</id>
        <name>B</name>
        <sequence type="described" ref="VSP_005628"/>
    </isoform>
    <isoform>
        <id>O14717-3</id>
        <name>C</name>
        <sequence type="described" ref="VSP_005629"/>
    </isoform>
    <isoform>
        <id>O14717-4</id>
        <name>D</name>
        <sequence type="described" ref="VSP_005630 VSP_005631"/>
    </isoform>
    <isoform>
        <id>O14717-5</id>
        <name>E</name>
        <sequence type="described" ref="VSP_005632 VSP_005633"/>
    </isoform>
    <isoform>
        <id>O14717-6</id>
        <name>F</name>
        <sequence type="described" ref="VSP_005634 VSP_005635"/>
    </isoform>
    <text>Additional isoforms seem to exist.</text>
</comment>
<comment type="tissue specificity">
    <text>Ubiquitous. Higher expression in testis, ovary and thymus and at much lower levels in spleen, prostate, colon, small intestine, and peripheral blood leukocytes.</text>
</comment>
<comment type="similarity">
    <text evidence="1">Belongs to the class I-like SAM-binding methyltransferase superfamily. C5-methyltransferase family.</text>
</comment>
<gene>
    <name type="primary">TRDMT1</name>
    <name evidence="7" type="synonym">DNMT2</name>
</gene>
<protein>
    <recommendedName>
        <fullName>tRNA (cytosine(38)-C(5))-methyltransferase</fullName>
        <ecNumber evidence="4">2.1.1.204</ecNumber>
    </recommendedName>
    <alternativeName>
        <fullName evidence="7">DNA (cytosine-5)-methyltransferase-like protein 2</fullName>
        <shortName evidence="7">Dnmt2</shortName>
    </alternativeName>
    <alternativeName>
        <fullName>DNA methyltransferase homolog HsaIIP</fullName>
        <shortName>DNA MTase homolog HsaIIP</shortName>
        <shortName>M.HsaIIP</shortName>
    </alternativeName>
    <alternativeName>
        <fullName>PuMet</fullName>
    </alternativeName>
</protein>
<organism>
    <name type="scientific">Homo sapiens</name>
    <name type="common">Human</name>
    <dbReference type="NCBI Taxonomy" id="9606"/>
    <lineage>
        <taxon>Eukaryota</taxon>
        <taxon>Metazoa</taxon>
        <taxon>Chordata</taxon>
        <taxon>Craniata</taxon>
        <taxon>Vertebrata</taxon>
        <taxon>Euteleostomi</taxon>
        <taxon>Mammalia</taxon>
        <taxon>Eutheria</taxon>
        <taxon>Euarchontoglires</taxon>
        <taxon>Primates</taxon>
        <taxon>Haplorrhini</taxon>
        <taxon>Catarrhini</taxon>
        <taxon>Hominidae</taxon>
        <taxon>Homo</taxon>
    </lineage>
</organism>
<feature type="chain" id="PRO_0000088040" description="tRNA (cytosine(38)-C(5))-methyltransferase">
    <location>
        <begin position="1"/>
        <end position="391"/>
    </location>
</feature>
<feature type="domain" description="SAM-dependent MTase C5-type" evidence="1">
    <location>
        <begin position="4"/>
        <end position="391"/>
    </location>
</feature>
<feature type="active site" evidence="1">
    <location>
        <position position="79"/>
    </location>
</feature>
<feature type="binding site" evidence="2 9">
    <location>
        <begin position="13"/>
        <end position="15"/>
    </location>
    <ligand>
        <name>S-adenosyl-L-methionine</name>
        <dbReference type="ChEBI" id="CHEBI:59789"/>
    </ligand>
</feature>
<feature type="binding site" evidence="2 9">
    <location>
        <position position="34"/>
    </location>
    <ligand>
        <name>S-adenosyl-L-methionine</name>
        <dbReference type="ChEBI" id="CHEBI:59789"/>
    </ligand>
</feature>
<feature type="binding site" evidence="2 9">
    <location>
        <begin position="57"/>
        <end position="58"/>
    </location>
    <ligand>
        <name>S-adenosyl-L-methionine</name>
        <dbReference type="ChEBI" id="CHEBI:59789"/>
    </ligand>
</feature>
<feature type="binding site" evidence="2 9">
    <location>
        <position position="76"/>
    </location>
    <ligand>
        <name>S-adenosyl-L-methionine</name>
        <dbReference type="ChEBI" id="CHEBI:59789"/>
    </ligand>
</feature>
<feature type="binding site" evidence="2 9">
    <location>
        <position position="376"/>
    </location>
    <ligand>
        <name>S-adenosyl-L-methionine</name>
        <dbReference type="ChEBI" id="CHEBI:59789"/>
    </ligand>
</feature>
<feature type="splice variant" id="VSP_005634" description="In isoform F." evidence="6">
    <original>GITLEEFDRLSFDMILMSPPCQPFTRIGRQGDMTDSRTNSFLHILDILP</original>
    <variation>RPLDTNNRKLWLSVPRVYIISNLSWHSKFKATIFSYCKASVRAITLSSP</variation>
    <location>
        <begin position="59"/>
        <end position="107"/>
    </location>
</feature>
<feature type="splice variant" id="VSP_005632" description="In isoform E." evidence="6">
    <original>GITLEEFDRLSFD</original>
    <variation>ITKITKVYSFGKC</variation>
    <location>
        <begin position="59"/>
        <end position="71"/>
    </location>
</feature>
<feature type="splice variant" id="VSP_005630" description="In isoform D." evidence="6">
    <original>GITLE</original>
    <variation>DWPAG</variation>
    <location>
        <begin position="59"/>
        <end position="63"/>
    </location>
</feature>
<feature type="splice variant" id="VSP_005631" description="In isoform D." evidence="6">
    <location>
        <begin position="64"/>
        <end position="391"/>
    </location>
</feature>
<feature type="splice variant" id="VSP_005633" description="In isoform E." evidence="6">
    <location>
        <begin position="72"/>
        <end position="391"/>
    </location>
</feature>
<feature type="splice variant" id="VSP_005629" description="In isoform C." evidence="6">
    <location>
        <begin position="84"/>
        <end position="129"/>
    </location>
</feature>
<feature type="splice variant" id="VSP_005628" description="In isoform B." evidence="6">
    <location>
        <begin position="84"/>
        <end position="107"/>
    </location>
</feature>
<feature type="splice variant" id="VSP_005635" description="In isoform F." evidence="6">
    <location>
        <begin position="108"/>
        <end position="391"/>
    </location>
</feature>
<feature type="sequence variant" id="VAR_051961" description="In dbSNP:rs11254413." evidence="3">
    <original>H</original>
    <variation>Y</variation>
    <location>
        <position position="101"/>
    </location>
</feature>
<feature type="sequence conflict" description="In Ref. 3; AAC39764." evidence="8" ref="3">
    <original>L</original>
    <variation>I</variation>
    <location>
        <position position="148"/>
    </location>
</feature>
<feature type="strand" evidence="10">
    <location>
        <begin position="4"/>
        <end position="9"/>
    </location>
</feature>
<feature type="helix" evidence="10">
    <location>
        <begin position="15"/>
        <end position="23"/>
    </location>
</feature>
<feature type="strand" evidence="10">
    <location>
        <begin position="26"/>
        <end position="33"/>
    </location>
</feature>
<feature type="helix" evidence="10">
    <location>
        <begin position="37"/>
        <end position="46"/>
    </location>
</feature>
<feature type="helix" evidence="10">
    <location>
        <begin position="57"/>
        <end position="59"/>
    </location>
</feature>
<feature type="helix" evidence="10">
    <location>
        <begin position="62"/>
        <end position="68"/>
    </location>
</feature>
<feature type="strand" evidence="10">
    <location>
        <begin position="71"/>
        <end position="75"/>
    </location>
</feature>
<feature type="helix" evidence="10">
    <location>
        <begin position="98"/>
        <end position="105"/>
    </location>
</feature>
<feature type="helix" evidence="10">
    <location>
        <begin position="106"/>
        <end position="108"/>
    </location>
</feature>
<feature type="strand" evidence="10">
    <location>
        <begin position="114"/>
        <end position="121"/>
    </location>
</feature>
<feature type="helix" evidence="10">
    <location>
        <begin position="124"/>
        <end position="126"/>
    </location>
</feature>
<feature type="helix" evidence="10">
    <location>
        <begin position="128"/>
        <end position="139"/>
    </location>
</feature>
<feature type="strand" evidence="10">
    <location>
        <begin position="142"/>
        <end position="149"/>
    </location>
</feature>
<feature type="helix" evidence="10">
    <location>
        <begin position="151"/>
        <end position="154"/>
    </location>
</feature>
<feature type="strand" evidence="10">
    <location>
        <begin position="162"/>
        <end position="172"/>
    </location>
</feature>
<feature type="strand" evidence="10">
    <location>
        <begin position="182"/>
        <end position="185"/>
    </location>
</feature>
<feature type="helix" evidence="10">
    <location>
        <begin position="253"/>
        <end position="256"/>
    </location>
</feature>
<feature type="helix" evidence="10">
    <location>
        <begin position="263"/>
        <end position="266"/>
    </location>
</feature>
<feature type="helix" evidence="10">
    <location>
        <begin position="270"/>
        <end position="276"/>
    </location>
</feature>
<feature type="helix" evidence="10">
    <location>
        <begin position="277"/>
        <end position="279"/>
    </location>
</feature>
<feature type="turn" evidence="10">
    <location>
        <begin position="295"/>
        <end position="299"/>
    </location>
</feature>
<feature type="strand" evidence="10">
    <location>
        <begin position="307"/>
        <end position="309"/>
    </location>
</feature>
<feature type="helix" evidence="10">
    <location>
        <begin position="316"/>
        <end position="321"/>
    </location>
</feature>
<feature type="turn" evidence="10">
    <location>
        <begin position="322"/>
        <end position="325"/>
    </location>
</feature>
<feature type="helix" evidence="10">
    <location>
        <begin position="328"/>
        <end position="336"/>
    </location>
</feature>
<feature type="helix" evidence="10">
    <location>
        <begin position="345"/>
        <end position="351"/>
    </location>
</feature>
<feature type="helix" evidence="10">
    <location>
        <begin position="366"/>
        <end position="375"/>
    </location>
</feature>
<feature type="helix" evidence="10">
    <location>
        <begin position="379"/>
        <end position="390"/>
    </location>
</feature>
<accession>O14717</accession>
<accession>B0YJ02</accession>
<accession>B0YJ03</accession>
<accession>B0YJ07</accession>
<accession>B0YJ08</accession>
<accession>O43669</accession>
<accession>Q86WW6</accession>
<sequence>MEPLRVLELYSGVGGMHHALRESCIPAQVVAAIDVNTVANEVYKYNFPHTQLLAKTIEGITLEEFDRLSFDMILMSPPCQPFTRIGRQGDMTDSRTNSFLHILDILPRLQKLPKYILLENVKGFEVSSTRDLLIQTIENCGFQYQEFLLSPTSLGIPNSRLRYFLIAKLQSEPLPFQAPGQVLMEFPKIESVHPQKYAMDVENKIQEKNVEPNISFDGSIQCSGKDAILFKLETAEEIHRKNQQDSDLSVKMLKDFLEDDTDVNQYLLPPKSLLRYALLLDIVQPTCRRSVCFTKGYGSYIEGTGSVLQTAEDVQVENIYKSLTNLSQEEQITKLLILKLRYFTPKEIANLLGFPPEFGFPEKITVKQRYRLLGNSLNVHVVAKLIKILYE</sequence>
<proteinExistence type="evidence at protein level"/>